<feature type="chain" id="PRO_1000164457" description="Xanthine phosphoribosyltransferase">
    <location>
        <begin position="1"/>
        <end position="193"/>
    </location>
</feature>
<feature type="binding site" evidence="1">
    <location>
        <position position="20"/>
    </location>
    <ligand>
        <name>xanthine</name>
        <dbReference type="ChEBI" id="CHEBI:17712"/>
    </ligand>
</feature>
<feature type="binding site" evidence="1">
    <location>
        <position position="27"/>
    </location>
    <ligand>
        <name>xanthine</name>
        <dbReference type="ChEBI" id="CHEBI:17712"/>
    </ligand>
</feature>
<feature type="binding site" evidence="1">
    <location>
        <begin position="128"/>
        <end position="132"/>
    </location>
    <ligand>
        <name>5-phospho-alpha-D-ribose 1-diphosphate</name>
        <dbReference type="ChEBI" id="CHEBI:58017"/>
    </ligand>
</feature>
<feature type="binding site" evidence="1">
    <location>
        <position position="156"/>
    </location>
    <ligand>
        <name>xanthine</name>
        <dbReference type="ChEBI" id="CHEBI:17712"/>
    </ligand>
</feature>
<accession>B9DS40</accession>
<keyword id="KW-0963">Cytoplasm</keyword>
<keyword id="KW-0328">Glycosyltransferase</keyword>
<keyword id="KW-0660">Purine salvage</keyword>
<keyword id="KW-1185">Reference proteome</keyword>
<keyword id="KW-0808">Transferase</keyword>
<proteinExistence type="inferred from homology"/>
<gene>
    <name evidence="1" type="primary">xpt</name>
    <name type="ordered locus">SUB0866</name>
</gene>
<comment type="function">
    <text evidence="1">Converts the preformed base xanthine, a product of nucleic acid breakdown, to xanthosine 5'-monophosphate (XMP), so it can be reused for RNA or DNA synthesis.</text>
</comment>
<comment type="catalytic activity">
    <reaction evidence="1">
        <text>XMP + diphosphate = xanthine + 5-phospho-alpha-D-ribose 1-diphosphate</text>
        <dbReference type="Rhea" id="RHEA:10800"/>
        <dbReference type="ChEBI" id="CHEBI:17712"/>
        <dbReference type="ChEBI" id="CHEBI:33019"/>
        <dbReference type="ChEBI" id="CHEBI:57464"/>
        <dbReference type="ChEBI" id="CHEBI:58017"/>
        <dbReference type="EC" id="2.4.2.22"/>
    </reaction>
</comment>
<comment type="pathway">
    <text evidence="1">Purine metabolism; XMP biosynthesis via salvage pathway; XMP from xanthine: step 1/1.</text>
</comment>
<comment type="subunit">
    <text evidence="1">Homodimer.</text>
</comment>
<comment type="subcellular location">
    <subcellularLocation>
        <location evidence="1">Cytoplasm</location>
    </subcellularLocation>
</comment>
<comment type="similarity">
    <text evidence="1">Belongs to the purine/pyrimidine phosphoribosyltransferase family. Xpt subfamily.</text>
</comment>
<organism>
    <name type="scientific">Streptococcus uberis (strain ATCC BAA-854 / 0140J)</name>
    <dbReference type="NCBI Taxonomy" id="218495"/>
    <lineage>
        <taxon>Bacteria</taxon>
        <taxon>Bacillati</taxon>
        <taxon>Bacillota</taxon>
        <taxon>Bacilli</taxon>
        <taxon>Lactobacillales</taxon>
        <taxon>Streptococcaceae</taxon>
        <taxon>Streptococcus</taxon>
    </lineage>
</organism>
<dbReference type="EC" id="2.4.2.22" evidence="1"/>
<dbReference type="EMBL" id="AM946015">
    <property type="protein sequence ID" value="CAR41924.1"/>
    <property type="molecule type" value="Genomic_DNA"/>
</dbReference>
<dbReference type="RefSeq" id="WP_012658368.1">
    <property type="nucleotide sequence ID" value="NC_012004.1"/>
</dbReference>
<dbReference type="SMR" id="B9DS40"/>
<dbReference type="STRING" id="218495.SUB0866"/>
<dbReference type="KEGG" id="sub:SUB0866"/>
<dbReference type="eggNOG" id="COG0503">
    <property type="taxonomic scope" value="Bacteria"/>
</dbReference>
<dbReference type="HOGENOM" id="CLU_099015_0_0_9"/>
<dbReference type="OrthoDB" id="9790678at2"/>
<dbReference type="UniPathway" id="UPA00602">
    <property type="reaction ID" value="UER00658"/>
</dbReference>
<dbReference type="Proteomes" id="UP000000449">
    <property type="component" value="Chromosome"/>
</dbReference>
<dbReference type="GO" id="GO:0005737">
    <property type="term" value="C:cytoplasm"/>
    <property type="evidence" value="ECO:0007669"/>
    <property type="project" value="UniProtKB-SubCell"/>
</dbReference>
<dbReference type="GO" id="GO:0000310">
    <property type="term" value="F:xanthine phosphoribosyltransferase activity"/>
    <property type="evidence" value="ECO:0007669"/>
    <property type="project" value="UniProtKB-UniRule"/>
</dbReference>
<dbReference type="GO" id="GO:0006166">
    <property type="term" value="P:purine ribonucleoside salvage"/>
    <property type="evidence" value="ECO:0007669"/>
    <property type="project" value="UniProtKB-KW"/>
</dbReference>
<dbReference type="GO" id="GO:0046110">
    <property type="term" value="P:xanthine metabolic process"/>
    <property type="evidence" value="ECO:0007669"/>
    <property type="project" value="InterPro"/>
</dbReference>
<dbReference type="GO" id="GO:0032265">
    <property type="term" value="P:XMP salvage"/>
    <property type="evidence" value="ECO:0007669"/>
    <property type="project" value="UniProtKB-UniRule"/>
</dbReference>
<dbReference type="CDD" id="cd06223">
    <property type="entry name" value="PRTases_typeI"/>
    <property type="match status" value="1"/>
</dbReference>
<dbReference type="Gene3D" id="3.40.50.2020">
    <property type="match status" value="1"/>
</dbReference>
<dbReference type="HAMAP" id="MF_01184">
    <property type="entry name" value="XPRTase"/>
    <property type="match status" value="1"/>
</dbReference>
<dbReference type="InterPro" id="IPR000836">
    <property type="entry name" value="PRibTrfase_dom"/>
</dbReference>
<dbReference type="InterPro" id="IPR029057">
    <property type="entry name" value="PRTase-like"/>
</dbReference>
<dbReference type="InterPro" id="IPR050118">
    <property type="entry name" value="Pur/Pyrimidine_PRTase"/>
</dbReference>
<dbReference type="InterPro" id="IPR010079">
    <property type="entry name" value="Xanthine_PRibTrfase"/>
</dbReference>
<dbReference type="NCBIfam" id="NF006671">
    <property type="entry name" value="PRK09219.1"/>
    <property type="match status" value="1"/>
</dbReference>
<dbReference type="NCBIfam" id="TIGR01744">
    <property type="entry name" value="XPRTase"/>
    <property type="match status" value="1"/>
</dbReference>
<dbReference type="PANTHER" id="PTHR43864">
    <property type="entry name" value="HYPOXANTHINE/GUANINE PHOSPHORIBOSYLTRANSFERASE"/>
    <property type="match status" value="1"/>
</dbReference>
<dbReference type="PANTHER" id="PTHR43864:SF1">
    <property type="entry name" value="XANTHINE PHOSPHORIBOSYLTRANSFERASE"/>
    <property type="match status" value="1"/>
</dbReference>
<dbReference type="Pfam" id="PF00156">
    <property type="entry name" value="Pribosyltran"/>
    <property type="match status" value="1"/>
</dbReference>
<dbReference type="SUPFAM" id="SSF53271">
    <property type="entry name" value="PRTase-like"/>
    <property type="match status" value="1"/>
</dbReference>
<protein>
    <recommendedName>
        <fullName evidence="1">Xanthine phosphoribosyltransferase</fullName>
        <shortName evidence="1">XPRTase</shortName>
        <ecNumber evidence="1">2.4.2.22</ecNumber>
    </recommendedName>
</protein>
<reference key="1">
    <citation type="journal article" date="2009" name="BMC Genomics">
        <title>Evidence for niche adaptation in the genome of the bovine pathogen Streptococcus uberis.</title>
        <authorList>
            <person name="Ward P.N."/>
            <person name="Holden M.T.G."/>
            <person name="Leigh J.A."/>
            <person name="Lennard N."/>
            <person name="Bignell A."/>
            <person name="Barron A."/>
            <person name="Clark L."/>
            <person name="Quail M.A."/>
            <person name="Woodward J."/>
            <person name="Barrell B.G."/>
            <person name="Egan S.A."/>
            <person name="Field T.R."/>
            <person name="Maskell D."/>
            <person name="Kehoe M."/>
            <person name="Dowson C.G."/>
            <person name="Chanter N."/>
            <person name="Whatmore A.M."/>
            <person name="Bentley S.D."/>
            <person name="Parkhill J."/>
        </authorList>
    </citation>
    <scope>NUCLEOTIDE SEQUENCE [LARGE SCALE GENOMIC DNA]</scope>
    <source>
        <strain>ATCC BAA-854 / 0140J</strain>
    </source>
</reference>
<evidence type="ECO:0000255" key="1">
    <source>
        <dbReference type="HAMAP-Rule" id="MF_01184"/>
    </source>
</evidence>
<sequence>MKLLEERIIKDGNVLGENILKVDSFLTHQVDYHLMRDIGKVFAESYADAGITKVVTIEASGIAPAVYVAEALKVPMIFAKKHKNITMTEGILTAEVYSFTKQVTSTVSIASKFLSKDDKVLIIDDFLANGQAAKGLIEIIQQAGASVEGVGIVIEKSFQDGRQLLENMGVKVTSLARIKNFENGRLNFMEADA</sequence>
<name>XPT_STRU0</name>